<name>ACCD_PSEAE</name>
<dbReference type="EC" id="2.1.3.15" evidence="1"/>
<dbReference type="EMBL" id="AB031231">
    <property type="protein sequence ID" value="BAB13795.1"/>
    <property type="molecule type" value="Genomic_DNA"/>
</dbReference>
<dbReference type="EMBL" id="AE004091">
    <property type="protein sequence ID" value="AAG06500.1"/>
    <property type="molecule type" value="Genomic_DNA"/>
</dbReference>
<dbReference type="PIR" id="C83257">
    <property type="entry name" value="C83257"/>
</dbReference>
<dbReference type="RefSeq" id="NP_251802.1">
    <property type="nucleotide sequence ID" value="NC_002516.2"/>
</dbReference>
<dbReference type="RefSeq" id="WP_003104199.1">
    <property type="nucleotide sequence ID" value="NZ_QZGE01000023.1"/>
</dbReference>
<dbReference type="SMR" id="Q9HZA7"/>
<dbReference type="FunCoup" id="Q9HZA7">
    <property type="interactions" value="568"/>
</dbReference>
<dbReference type="STRING" id="208964.PA3112"/>
<dbReference type="PaxDb" id="208964-PA3112"/>
<dbReference type="DNASU" id="877680"/>
<dbReference type="GeneID" id="877680"/>
<dbReference type="KEGG" id="pae:PA3112"/>
<dbReference type="PATRIC" id="fig|208964.12.peg.3264"/>
<dbReference type="PseudoCAP" id="PA3112"/>
<dbReference type="HOGENOM" id="CLU_015486_1_0_6"/>
<dbReference type="InParanoid" id="Q9HZA7"/>
<dbReference type="OrthoDB" id="9772975at2"/>
<dbReference type="PhylomeDB" id="Q9HZA7"/>
<dbReference type="BioCyc" id="PAER208964:G1FZ6-3168-MONOMER"/>
<dbReference type="UniPathway" id="UPA00655">
    <property type="reaction ID" value="UER00711"/>
</dbReference>
<dbReference type="Proteomes" id="UP000002438">
    <property type="component" value="Chromosome"/>
</dbReference>
<dbReference type="GO" id="GO:0009329">
    <property type="term" value="C:acetate CoA-transferase complex"/>
    <property type="evidence" value="ECO:0000318"/>
    <property type="project" value="GO_Central"/>
</dbReference>
<dbReference type="GO" id="GO:0003989">
    <property type="term" value="F:acetyl-CoA carboxylase activity"/>
    <property type="evidence" value="ECO:0007669"/>
    <property type="project" value="InterPro"/>
</dbReference>
<dbReference type="GO" id="GO:0005524">
    <property type="term" value="F:ATP binding"/>
    <property type="evidence" value="ECO:0007669"/>
    <property type="project" value="UniProtKB-KW"/>
</dbReference>
<dbReference type="GO" id="GO:0016743">
    <property type="term" value="F:carboxyl- or carbamoyltransferase activity"/>
    <property type="evidence" value="ECO:0007669"/>
    <property type="project" value="UniProtKB-UniRule"/>
</dbReference>
<dbReference type="GO" id="GO:0008270">
    <property type="term" value="F:zinc ion binding"/>
    <property type="evidence" value="ECO:0007669"/>
    <property type="project" value="UniProtKB-UniRule"/>
</dbReference>
<dbReference type="GO" id="GO:0006633">
    <property type="term" value="P:fatty acid biosynthetic process"/>
    <property type="evidence" value="ECO:0000318"/>
    <property type="project" value="GO_Central"/>
</dbReference>
<dbReference type="GO" id="GO:2001295">
    <property type="term" value="P:malonyl-CoA biosynthetic process"/>
    <property type="evidence" value="ECO:0000318"/>
    <property type="project" value="GO_Central"/>
</dbReference>
<dbReference type="GO" id="GO:0017148">
    <property type="term" value="P:negative regulation of translation"/>
    <property type="evidence" value="ECO:0000318"/>
    <property type="project" value="GO_Central"/>
</dbReference>
<dbReference type="Gene3D" id="3.90.226.10">
    <property type="entry name" value="2-enoyl-CoA Hydratase, Chain A, domain 1"/>
    <property type="match status" value="1"/>
</dbReference>
<dbReference type="HAMAP" id="MF_01395">
    <property type="entry name" value="AcetylCoA_CT_beta"/>
    <property type="match status" value="1"/>
</dbReference>
<dbReference type="InterPro" id="IPR034733">
    <property type="entry name" value="AcCoA_carboxyl_beta"/>
</dbReference>
<dbReference type="InterPro" id="IPR000438">
    <property type="entry name" value="Acetyl_CoA_COase_Trfase_b_su"/>
</dbReference>
<dbReference type="InterPro" id="IPR029045">
    <property type="entry name" value="ClpP/crotonase-like_dom_sf"/>
</dbReference>
<dbReference type="InterPro" id="IPR011762">
    <property type="entry name" value="COA_CT_N"/>
</dbReference>
<dbReference type="InterPro" id="IPR041010">
    <property type="entry name" value="Znf-ACC"/>
</dbReference>
<dbReference type="NCBIfam" id="TIGR00515">
    <property type="entry name" value="accD"/>
    <property type="match status" value="1"/>
</dbReference>
<dbReference type="PANTHER" id="PTHR42995">
    <property type="entry name" value="ACETYL-COENZYME A CARBOXYLASE CARBOXYL TRANSFERASE SUBUNIT BETA, CHLOROPLASTIC"/>
    <property type="match status" value="1"/>
</dbReference>
<dbReference type="PANTHER" id="PTHR42995:SF5">
    <property type="entry name" value="ACETYL-COENZYME A CARBOXYLASE CARBOXYL TRANSFERASE SUBUNIT BETA, CHLOROPLASTIC"/>
    <property type="match status" value="1"/>
</dbReference>
<dbReference type="Pfam" id="PF01039">
    <property type="entry name" value="Carboxyl_trans"/>
    <property type="match status" value="1"/>
</dbReference>
<dbReference type="Pfam" id="PF17848">
    <property type="entry name" value="Zn_ribbon_ACC"/>
    <property type="match status" value="1"/>
</dbReference>
<dbReference type="PRINTS" id="PR01070">
    <property type="entry name" value="ACCCTRFRASEB"/>
</dbReference>
<dbReference type="SUPFAM" id="SSF52096">
    <property type="entry name" value="ClpP/crotonase"/>
    <property type="match status" value="1"/>
</dbReference>
<dbReference type="PROSITE" id="PS50980">
    <property type="entry name" value="COA_CT_NTER"/>
    <property type="match status" value="1"/>
</dbReference>
<sequence>MSNWLVDKLIPSIMRSESQKSSVPEGLWHKCPSCEAVLYRPELEKTLDVCPKCDHHMRINARTRLDIFLDEDGREELGADLEPVDRLKFRDSKKYKDRLAAAQKDTGEKDALIAMSGKLQGMPVVACAFEFSFMGGSMGAIVGERFVRAANVALEKRCPLICFSASGGARMQEALISLMQMAKTSAVLARLREEGIPFVSVLTDPVYGGVSASLAMLGDVIVGEPKALIGFAGPRVIEQTVREKLPEGFQRSEFLLEHGAIDMIVHRAELRPRLANLLSAFTHSPSPVSA</sequence>
<reference key="1">
    <citation type="journal article" date="2000" name="Microbiol. Immunol.">
        <title>Molecular analysis of the folC gene of Pseudomonas aeruginosa.</title>
        <authorList>
            <person name="Murata T."/>
            <person name="Bognar A.L."/>
            <person name="Hayashi T."/>
            <person name="Ohnishi M."/>
            <person name="Nakayama K."/>
            <person name="Terawaki Y."/>
        </authorList>
    </citation>
    <scope>NUCLEOTIDE SEQUENCE [GENOMIC DNA]</scope>
    <source>
        <strain>ATCC 15692 / DSM 22644 / CIP 104116 / JCM 14847 / LMG 12228 / 1C / PRS 101 / PAO1</strain>
    </source>
</reference>
<reference key="2">
    <citation type="journal article" date="2000" name="Nature">
        <title>Complete genome sequence of Pseudomonas aeruginosa PAO1, an opportunistic pathogen.</title>
        <authorList>
            <person name="Stover C.K."/>
            <person name="Pham X.-Q.T."/>
            <person name="Erwin A.L."/>
            <person name="Mizoguchi S.D."/>
            <person name="Warrener P."/>
            <person name="Hickey M.J."/>
            <person name="Brinkman F.S.L."/>
            <person name="Hufnagle W.O."/>
            <person name="Kowalik D.J."/>
            <person name="Lagrou M."/>
            <person name="Garber R.L."/>
            <person name="Goltry L."/>
            <person name="Tolentino E."/>
            <person name="Westbrock-Wadman S."/>
            <person name="Yuan Y."/>
            <person name="Brody L.L."/>
            <person name="Coulter S.N."/>
            <person name="Folger K.R."/>
            <person name="Kas A."/>
            <person name="Larbig K."/>
            <person name="Lim R.M."/>
            <person name="Smith K.A."/>
            <person name="Spencer D.H."/>
            <person name="Wong G.K.-S."/>
            <person name="Wu Z."/>
            <person name="Paulsen I.T."/>
            <person name="Reizer J."/>
            <person name="Saier M.H. Jr."/>
            <person name="Hancock R.E.W."/>
            <person name="Lory S."/>
            <person name="Olson M.V."/>
        </authorList>
    </citation>
    <scope>NUCLEOTIDE SEQUENCE [LARGE SCALE GENOMIC DNA]</scope>
    <source>
        <strain>ATCC 15692 / DSM 22644 / CIP 104116 / JCM 14847 / LMG 12228 / 1C / PRS 101 / PAO1</strain>
    </source>
</reference>
<reference key="3">
    <citation type="journal article" date="2004" name="J. Biol. Chem.">
        <title>Identification and characterization of the first class of potent bacterial acetyl-CoA carboxylase inhibitors with antibacterial activity.</title>
        <authorList>
            <person name="Freiberg C."/>
            <person name="Brunner N.A."/>
            <person name="Schiffer G."/>
            <person name="Lampe T."/>
            <person name="Pohlmann J."/>
            <person name="Brands M."/>
            <person name="Raabe M."/>
            <person name="Haebich D."/>
            <person name="Ziegelbauer K."/>
        </authorList>
    </citation>
    <scope>CHARACTERIZATION OF ACTIVITY REGULATION</scope>
    <source>
        <strain>ATCC 15692 / DSM 22644 / CIP 104116 / JCM 14847 / LMG 12228 / 1C / PRS 101 / PAO1</strain>
    </source>
</reference>
<gene>
    <name evidence="1" type="primary">accD</name>
    <name type="ordered locus">PA3112</name>
</gene>
<protein>
    <recommendedName>
        <fullName evidence="1">Acetyl-coenzyme A carboxylase carboxyl transferase subunit beta</fullName>
        <shortName evidence="1">ACCase subunit beta</shortName>
        <shortName evidence="1">Acetyl-CoA carboxylase carboxyltransferase subunit beta</shortName>
        <ecNumber evidence="1">2.1.3.15</ecNumber>
    </recommendedName>
</protein>
<comment type="function">
    <text evidence="1">Component of the acetyl coenzyme A carboxylase (ACC) complex. Biotin carboxylase (BC) catalyzes the carboxylation of biotin on its carrier protein (BCCP) and then the CO(2) group is transferred by the transcarboxylase to acetyl-CoA to form malonyl-CoA.</text>
</comment>
<comment type="catalytic activity">
    <reaction evidence="1">
        <text>N(6)-carboxybiotinyl-L-lysyl-[protein] + acetyl-CoA = N(6)-biotinyl-L-lysyl-[protein] + malonyl-CoA</text>
        <dbReference type="Rhea" id="RHEA:54728"/>
        <dbReference type="Rhea" id="RHEA-COMP:10505"/>
        <dbReference type="Rhea" id="RHEA-COMP:10506"/>
        <dbReference type="ChEBI" id="CHEBI:57288"/>
        <dbReference type="ChEBI" id="CHEBI:57384"/>
        <dbReference type="ChEBI" id="CHEBI:83144"/>
        <dbReference type="ChEBI" id="CHEBI:83145"/>
        <dbReference type="EC" id="2.1.3.15"/>
    </reaction>
</comment>
<comment type="cofactor">
    <cofactor evidence="1">
        <name>Zn(2+)</name>
        <dbReference type="ChEBI" id="CHEBI:29105"/>
    </cofactor>
    <text evidence="1">Binds 1 zinc ion per subunit.</text>
</comment>
<comment type="activity regulation">
    <text>Inhibited by pyrrolidine dione antibiotic moiramide B (CPD1); in vivo the effects are not seen unless the efflux MexAB-OprM system is inactive.</text>
</comment>
<comment type="pathway">
    <text evidence="1">Lipid metabolism; malonyl-CoA biosynthesis; malonyl-CoA from acetyl-CoA: step 1/1.</text>
</comment>
<comment type="subunit">
    <text evidence="1">Acetyl-CoA carboxylase is a heterohexamer composed of biotin carboxyl carrier protein (AccB), biotin carboxylase (AccC) and two subunits each of ACCase subunit alpha (AccA) and ACCase subunit beta (AccD).</text>
</comment>
<comment type="subcellular location">
    <subcellularLocation>
        <location evidence="3">Cytoplasm</location>
    </subcellularLocation>
</comment>
<comment type="similarity">
    <text evidence="1">Belongs to the AccD/PCCB family.</text>
</comment>
<proteinExistence type="evidence at protein level"/>
<evidence type="ECO:0000255" key="1">
    <source>
        <dbReference type="HAMAP-Rule" id="MF_01395"/>
    </source>
</evidence>
<evidence type="ECO:0000255" key="2">
    <source>
        <dbReference type="PROSITE-ProRule" id="PRU01136"/>
    </source>
</evidence>
<evidence type="ECO:0000305" key="3"/>
<organism>
    <name type="scientific">Pseudomonas aeruginosa (strain ATCC 15692 / DSM 22644 / CIP 104116 / JCM 14847 / LMG 12228 / 1C / PRS 101 / PAO1)</name>
    <dbReference type="NCBI Taxonomy" id="208964"/>
    <lineage>
        <taxon>Bacteria</taxon>
        <taxon>Pseudomonadati</taxon>
        <taxon>Pseudomonadota</taxon>
        <taxon>Gammaproteobacteria</taxon>
        <taxon>Pseudomonadales</taxon>
        <taxon>Pseudomonadaceae</taxon>
        <taxon>Pseudomonas</taxon>
    </lineage>
</organism>
<feature type="chain" id="PRO_0000359033" description="Acetyl-coenzyme A carboxylase carboxyl transferase subunit beta">
    <location>
        <begin position="1"/>
        <end position="290"/>
    </location>
</feature>
<feature type="domain" description="CoA carboxyltransferase N-terminal" evidence="2">
    <location>
        <begin position="27"/>
        <end position="290"/>
    </location>
</feature>
<feature type="zinc finger region" description="C4-type" evidence="1">
    <location>
        <begin position="31"/>
        <end position="53"/>
    </location>
</feature>
<feature type="binding site" evidence="1">
    <location>
        <position position="31"/>
    </location>
    <ligand>
        <name>Zn(2+)</name>
        <dbReference type="ChEBI" id="CHEBI:29105"/>
    </ligand>
</feature>
<feature type="binding site" evidence="1">
    <location>
        <position position="34"/>
    </location>
    <ligand>
        <name>Zn(2+)</name>
        <dbReference type="ChEBI" id="CHEBI:29105"/>
    </ligand>
</feature>
<feature type="binding site" evidence="1">
    <location>
        <position position="50"/>
    </location>
    <ligand>
        <name>Zn(2+)</name>
        <dbReference type="ChEBI" id="CHEBI:29105"/>
    </ligand>
</feature>
<feature type="binding site" evidence="1">
    <location>
        <position position="53"/>
    </location>
    <ligand>
        <name>Zn(2+)</name>
        <dbReference type="ChEBI" id="CHEBI:29105"/>
    </ligand>
</feature>
<keyword id="KW-0067">ATP-binding</keyword>
<keyword id="KW-0963">Cytoplasm</keyword>
<keyword id="KW-0275">Fatty acid biosynthesis</keyword>
<keyword id="KW-0276">Fatty acid metabolism</keyword>
<keyword id="KW-0444">Lipid biosynthesis</keyword>
<keyword id="KW-0443">Lipid metabolism</keyword>
<keyword id="KW-0479">Metal-binding</keyword>
<keyword id="KW-0547">Nucleotide-binding</keyword>
<keyword id="KW-1185">Reference proteome</keyword>
<keyword id="KW-0808">Transferase</keyword>
<keyword id="KW-0862">Zinc</keyword>
<keyword id="KW-0863">Zinc-finger</keyword>
<accession>Q9HZA7</accession>
<accession>Q7DJF5</accession>